<gene>
    <name evidence="1" type="primary">dnaA</name>
    <name type="ordered locus">RPC_0001</name>
</gene>
<proteinExistence type="inferred from homology"/>
<evidence type="ECO:0000255" key="1">
    <source>
        <dbReference type="HAMAP-Rule" id="MF_00377"/>
    </source>
</evidence>
<accession>Q21DF6</accession>
<sequence length="473" mass="52613">MTNIEQDRWSRVKGRLRSSVGEDVYSSWFARMDLESVQPESVHLSVPTRFLKSWIQTHYSDRVLSCWQAEMPQVHRVDLTVRTAMRCAAPAKDAPAHAEPRRDDGRPAPELRATAIAPVSATHEALGGSPLDPRLTFGSFVIGRSNTLAHAAARQVAEGRRGDPVMFNPLYIHSGVGLGKTHLLQAVTWAGNSGTERKVLYLTAEKFMYGFVAALKSQTALAFKEALRGIDVLVIDDLQFLQGKTTQAEFCHTLNALIDAGRQVVIAADRPPSDLESLDERVRSRLAGGLVVEMASLGEDLRLGILKSRVTAARAHHASFDVPLPVLEYLARTITHNGRDLEGAINRLLAHSKLNAQPVTLEMAEREIRDLVRPQEPKRIKIEDIQRVVARQYNVSRSDLLSSRRTANVVRPRQVAMYLAKTLTLRSLPEIGRRFGGRDHTTVLHAVRKIEGLVAKDTALSDEVELLKRQLQE</sequence>
<dbReference type="EMBL" id="CP000301">
    <property type="protein sequence ID" value="ABD85580.1"/>
    <property type="molecule type" value="Genomic_DNA"/>
</dbReference>
<dbReference type="SMR" id="Q21DF6"/>
<dbReference type="STRING" id="316056.RPC_0001"/>
<dbReference type="KEGG" id="rpc:RPC_0001"/>
<dbReference type="eggNOG" id="COG0593">
    <property type="taxonomic scope" value="Bacteria"/>
</dbReference>
<dbReference type="HOGENOM" id="CLU_026910_3_0_5"/>
<dbReference type="OrthoDB" id="9807019at2"/>
<dbReference type="GO" id="GO:0005737">
    <property type="term" value="C:cytoplasm"/>
    <property type="evidence" value="ECO:0007669"/>
    <property type="project" value="UniProtKB-SubCell"/>
</dbReference>
<dbReference type="GO" id="GO:0005886">
    <property type="term" value="C:plasma membrane"/>
    <property type="evidence" value="ECO:0007669"/>
    <property type="project" value="TreeGrafter"/>
</dbReference>
<dbReference type="GO" id="GO:0005524">
    <property type="term" value="F:ATP binding"/>
    <property type="evidence" value="ECO:0007669"/>
    <property type="project" value="UniProtKB-UniRule"/>
</dbReference>
<dbReference type="GO" id="GO:0016887">
    <property type="term" value="F:ATP hydrolysis activity"/>
    <property type="evidence" value="ECO:0007669"/>
    <property type="project" value="InterPro"/>
</dbReference>
<dbReference type="GO" id="GO:0003688">
    <property type="term" value="F:DNA replication origin binding"/>
    <property type="evidence" value="ECO:0007669"/>
    <property type="project" value="UniProtKB-UniRule"/>
</dbReference>
<dbReference type="GO" id="GO:0008289">
    <property type="term" value="F:lipid binding"/>
    <property type="evidence" value="ECO:0007669"/>
    <property type="project" value="UniProtKB-KW"/>
</dbReference>
<dbReference type="GO" id="GO:0006270">
    <property type="term" value="P:DNA replication initiation"/>
    <property type="evidence" value="ECO:0007669"/>
    <property type="project" value="UniProtKB-UniRule"/>
</dbReference>
<dbReference type="GO" id="GO:0006275">
    <property type="term" value="P:regulation of DNA replication"/>
    <property type="evidence" value="ECO:0007669"/>
    <property type="project" value="UniProtKB-UniRule"/>
</dbReference>
<dbReference type="CDD" id="cd00009">
    <property type="entry name" value="AAA"/>
    <property type="match status" value="1"/>
</dbReference>
<dbReference type="CDD" id="cd06571">
    <property type="entry name" value="Bac_DnaA_C"/>
    <property type="match status" value="1"/>
</dbReference>
<dbReference type="FunFam" id="1.10.1750.10:FF:000002">
    <property type="entry name" value="Chromosomal replication initiator protein DnaA"/>
    <property type="match status" value="1"/>
</dbReference>
<dbReference type="FunFam" id="3.40.50.300:FF:000668">
    <property type="entry name" value="Chromosomal replication initiator protein DnaA"/>
    <property type="match status" value="1"/>
</dbReference>
<dbReference type="Gene3D" id="1.10.1750.10">
    <property type="match status" value="1"/>
</dbReference>
<dbReference type="Gene3D" id="1.10.8.60">
    <property type="match status" value="1"/>
</dbReference>
<dbReference type="Gene3D" id="3.30.300.180">
    <property type="match status" value="1"/>
</dbReference>
<dbReference type="Gene3D" id="3.40.50.300">
    <property type="entry name" value="P-loop containing nucleotide triphosphate hydrolases"/>
    <property type="match status" value="1"/>
</dbReference>
<dbReference type="HAMAP" id="MF_00377">
    <property type="entry name" value="DnaA_bact"/>
    <property type="match status" value="1"/>
</dbReference>
<dbReference type="InterPro" id="IPR003593">
    <property type="entry name" value="AAA+_ATPase"/>
</dbReference>
<dbReference type="InterPro" id="IPR001957">
    <property type="entry name" value="Chromosome_initiator_DnaA"/>
</dbReference>
<dbReference type="InterPro" id="IPR020591">
    <property type="entry name" value="Chromosome_initiator_DnaA-like"/>
</dbReference>
<dbReference type="InterPro" id="IPR018312">
    <property type="entry name" value="Chromosome_initiator_DnaA_CS"/>
</dbReference>
<dbReference type="InterPro" id="IPR013159">
    <property type="entry name" value="DnaA_C"/>
</dbReference>
<dbReference type="InterPro" id="IPR013317">
    <property type="entry name" value="DnaA_dom"/>
</dbReference>
<dbReference type="InterPro" id="IPR024633">
    <property type="entry name" value="DnaA_N_dom"/>
</dbReference>
<dbReference type="InterPro" id="IPR038454">
    <property type="entry name" value="DnaA_N_sf"/>
</dbReference>
<dbReference type="InterPro" id="IPR027417">
    <property type="entry name" value="P-loop_NTPase"/>
</dbReference>
<dbReference type="InterPro" id="IPR010921">
    <property type="entry name" value="Trp_repressor/repl_initiator"/>
</dbReference>
<dbReference type="NCBIfam" id="TIGR00362">
    <property type="entry name" value="DnaA"/>
    <property type="match status" value="1"/>
</dbReference>
<dbReference type="PANTHER" id="PTHR30050">
    <property type="entry name" value="CHROMOSOMAL REPLICATION INITIATOR PROTEIN DNAA"/>
    <property type="match status" value="1"/>
</dbReference>
<dbReference type="PANTHER" id="PTHR30050:SF2">
    <property type="entry name" value="CHROMOSOMAL REPLICATION INITIATOR PROTEIN DNAA"/>
    <property type="match status" value="1"/>
</dbReference>
<dbReference type="Pfam" id="PF00308">
    <property type="entry name" value="Bac_DnaA"/>
    <property type="match status" value="1"/>
</dbReference>
<dbReference type="Pfam" id="PF08299">
    <property type="entry name" value="Bac_DnaA_C"/>
    <property type="match status" value="1"/>
</dbReference>
<dbReference type="Pfam" id="PF11638">
    <property type="entry name" value="DnaA_N"/>
    <property type="match status" value="1"/>
</dbReference>
<dbReference type="PRINTS" id="PR00051">
    <property type="entry name" value="DNAA"/>
</dbReference>
<dbReference type="SMART" id="SM00382">
    <property type="entry name" value="AAA"/>
    <property type="match status" value="1"/>
</dbReference>
<dbReference type="SMART" id="SM00760">
    <property type="entry name" value="Bac_DnaA_C"/>
    <property type="match status" value="1"/>
</dbReference>
<dbReference type="SUPFAM" id="SSF52540">
    <property type="entry name" value="P-loop containing nucleoside triphosphate hydrolases"/>
    <property type="match status" value="1"/>
</dbReference>
<dbReference type="SUPFAM" id="SSF48295">
    <property type="entry name" value="TrpR-like"/>
    <property type="match status" value="1"/>
</dbReference>
<dbReference type="PROSITE" id="PS01008">
    <property type="entry name" value="DNAA"/>
    <property type="match status" value="1"/>
</dbReference>
<protein>
    <recommendedName>
        <fullName evidence="1">Chromosomal replication initiator protein DnaA</fullName>
    </recommendedName>
</protein>
<name>DNAA_RHOPB</name>
<reference key="1">
    <citation type="submission" date="2006-03" db="EMBL/GenBank/DDBJ databases">
        <title>Complete sequence of Rhodopseudomonas palustris BisB18.</title>
        <authorList>
            <consortium name="US DOE Joint Genome Institute"/>
            <person name="Copeland A."/>
            <person name="Lucas S."/>
            <person name="Lapidus A."/>
            <person name="Barry K."/>
            <person name="Detter J.C."/>
            <person name="Glavina del Rio T."/>
            <person name="Hammon N."/>
            <person name="Israni S."/>
            <person name="Dalin E."/>
            <person name="Tice H."/>
            <person name="Pitluck S."/>
            <person name="Chain P."/>
            <person name="Malfatti S."/>
            <person name="Shin M."/>
            <person name="Vergez L."/>
            <person name="Schmutz J."/>
            <person name="Larimer F."/>
            <person name="Land M."/>
            <person name="Hauser L."/>
            <person name="Pelletier D.A."/>
            <person name="Kyrpides N."/>
            <person name="Anderson I."/>
            <person name="Oda Y."/>
            <person name="Harwood C.S."/>
            <person name="Richardson P."/>
        </authorList>
    </citation>
    <scope>NUCLEOTIDE SEQUENCE [LARGE SCALE GENOMIC DNA]</scope>
    <source>
        <strain>BisB18</strain>
    </source>
</reference>
<comment type="function">
    <text evidence="1">Plays an essential role in the initiation and regulation of chromosomal replication. ATP-DnaA binds to the origin of replication (oriC) to initiate formation of the DNA replication initiation complex once per cell cycle. Binds the DnaA box (a 9 base pair repeat at the origin) and separates the double-stranded (ds)DNA. Forms a right-handed helical filament on oriC DNA; dsDNA binds to the exterior of the filament while single-stranded (ss)DNA is stabiized in the filament's interior. The ATP-DnaA-oriC complex binds and stabilizes one strand of the AT-rich DNA unwinding element (DUE), permitting loading of DNA polymerase. After initiation quickly degrades to an ADP-DnaA complex that is not apt for DNA replication. Binds acidic phospholipids.</text>
</comment>
<comment type="subunit">
    <text evidence="1">Oligomerizes as a right-handed, spiral filament on DNA at oriC.</text>
</comment>
<comment type="subcellular location">
    <subcellularLocation>
        <location evidence="1">Cytoplasm</location>
    </subcellularLocation>
</comment>
<comment type="domain">
    <text evidence="1">Domain I is involved in oligomerization and binding regulators, domain II is flexibile and of varying length in different bacteria, domain III forms the AAA+ region, while domain IV binds dsDNA.</text>
</comment>
<comment type="similarity">
    <text evidence="1">Belongs to the DnaA family.</text>
</comment>
<organism>
    <name type="scientific">Rhodopseudomonas palustris (strain BisB18)</name>
    <dbReference type="NCBI Taxonomy" id="316056"/>
    <lineage>
        <taxon>Bacteria</taxon>
        <taxon>Pseudomonadati</taxon>
        <taxon>Pseudomonadota</taxon>
        <taxon>Alphaproteobacteria</taxon>
        <taxon>Hyphomicrobiales</taxon>
        <taxon>Nitrobacteraceae</taxon>
        <taxon>Rhodopseudomonas</taxon>
    </lineage>
</organism>
<feature type="chain" id="PRO_1000048704" description="Chromosomal replication initiator protein DnaA">
    <location>
        <begin position="1"/>
        <end position="473"/>
    </location>
</feature>
<feature type="region of interest" description="Domain I, interacts with DnaA modulators" evidence="1">
    <location>
        <begin position="1"/>
        <end position="73"/>
    </location>
</feature>
<feature type="region of interest" description="Domain II" evidence="1">
    <location>
        <begin position="73"/>
        <end position="129"/>
    </location>
</feature>
<feature type="region of interest" description="Domain III, AAA+ region" evidence="1">
    <location>
        <begin position="130"/>
        <end position="352"/>
    </location>
</feature>
<feature type="region of interest" description="Domain IV, binds dsDNA" evidence="1">
    <location>
        <begin position="353"/>
        <end position="473"/>
    </location>
</feature>
<feature type="binding site" evidence="1">
    <location>
        <position position="177"/>
    </location>
    <ligand>
        <name>ATP</name>
        <dbReference type="ChEBI" id="CHEBI:30616"/>
    </ligand>
</feature>
<feature type="binding site" evidence="1">
    <location>
        <position position="179"/>
    </location>
    <ligand>
        <name>ATP</name>
        <dbReference type="ChEBI" id="CHEBI:30616"/>
    </ligand>
</feature>
<feature type="binding site" evidence="1">
    <location>
        <position position="180"/>
    </location>
    <ligand>
        <name>ATP</name>
        <dbReference type="ChEBI" id="CHEBI:30616"/>
    </ligand>
</feature>
<feature type="binding site" evidence="1">
    <location>
        <position position="181"/>
    </location>
    <ligand>
        <name>ATP</name>
        <dbReference type="ChEBI" id="CHEBI:30616"/>
    </ligand>
</feature>
<keyword id="KW-0067">ATP-binding</keyword>
<keyword id="KW-0963">Cytoplasm</keyword>
<keyword id="KW-0235">DNA replication</keyword>
<keyword id="KW-0238">DNA-binding</keyword>
<keyword id="KW-0446">Lipid-binding</keyword>
<keyword id="KW-0547">Nucleotide-binding</keyword>